<name>CEC_GALME</name>
<feature type="signal peptide" evidence="2">
    <location>
        <begin position="1"/>
        <end position="23"/>
    </location>
</feature>
<feature type="chain" id="PRO_5026692035" description="Cecropin" evidence="2">
    <location>
        <begin position="24"/>
        <end position="65"/>
    </location>
</feature>
<gene>
    <name type="primary">LOC113514368</name>
</gene>
<evidence type="ECO:0000250" key="1">
    <source>
        <dbReference type="UniProtKB" id="P01507"/>
    </source>
</evidence>
<evidence type="ECO:0000255" key="2"/>
<evidence type="ECO:0000269" key="3">
    <source>
    </source>
</evidence>
<evidence type="ECO:0000303" key="4">
    <source>
    </source>
</evidence>
<evidence type="ECO:0000305" key="5"/>
<evidence type="ECO:0000312" key="6">
    <source>
        <dbReference type="Proteomes" id="UP000504614"/>
    </source>
</evidence>
<comment type="function">
    <text evidence="1">Has antibacterial activity.</text>
</comment>
<comment type="subcellular location">
    <subcellularLocation>
        <location evidence="1">Secreted</location>
    </subcellularLocation>
    <text evidence="1">Secreted in the hemolymph.</text>
</comment>
<comment type="developmental stage">
    <text evidence="3">Expressed in fat body of last instar larvae.</text>
</comment>
<comment type="induction">
    <text evidence="3">Induced by A.niger alpha-1,3-glucan.</text>
</comment>
<comment type="similarity">
    <text evidence="5">Belongs to the cecropin family.</text>
</comment>
<accession>A0A6J1WQD0</accession>
<protein>
    <recommendedName>
        <fullName evidence="4">Cecropin</fullName>
    </recommendedName>
</protein>
<proteinExistence type="evidence at transcript level"/>
<dbReference type="EMBL" id="RBWF02003166">
    <property type="status" value="NOT_ANNOTATED_CDS"/>
    <property type="molecule type" value="Genomic_DNA"/>
</dbReference>
<dbReference type="SMR" id="A0A6J1WQD0"/>
<dbReference type="EnsemblMetazoa" id="XM_026898446.2">
    <property type="protein sequence ID" value="XP_026754247.1"/>
    <property type="gene ID" value="LOC113514368"/>
</dbReference>
<dbReference type="InParanoid" id="A0A6J1WQD0"/>
<dbReference type="Proteomes" id="UP000504614">
    <property type="component" value="Unplaced"/>
</dbReference>
<dbReference type="GO" id="GO:0005576">
    <property type="term" value="C:extracellular region"/>
    <property type="evidence" value="ECO:0007669"/>
    <property type="project" value="UniProtKB-SubCell"/>
</dbReference>
<dbReference type="GO" id="GO:0019731">
    <property type="term" value="P:antibacterial humoral response"/>
    <property type="evidence" value="ECO:0007669"/>
    <property type="project" value="InterPro"/>
</dbReference>
<dbReference type="GO" id="GO:0050830">
    <property type="term" value="P:defense response to Gram-positive bacterium"/>
    <property type="evidence" value="ECO:0007669"/>
    <property type="project" value="UniProtKB-ARBA"/>
</dbReference>
<dbReference type="GO" id="GO:0045087">
    <property type="term" value="P:innate immune response"/>
    <property type="evidence" value="ECO:0007669"/>
    <property type="project" value="UniProtKB-KW"/>
</dbReference>
<dbReference type="InterPro" id="IPR000875">
    <property type="entry name" value="Cecropin"/>
</dbReference>
<dbReference type="Pfam" id="PF00272">
    <property type="entry name" value="Cecropin"/>
    <property type="match status" value="1"/>
</dbReference>
<dbReference type="PROSITE" id="PS00268">
    <property type="entry name" value="CECROPIN"/>
    <property type="match status" value="1"/>
</dbReference>
<reference key="1">
    <citation type="submission" date="2018-10" db="EMBL/GenBank/DDBJ databases">
        <title>Genome sequence of Galleria mellonella, the greater wax moth.</title>
        <authorList>
            <person name="Calla B."/>
            <person name="Robertson H.M."/>
            <person name="Grozinger C.M."/>
            <person name="Robinson G.E."/>
            <person name="Dolezal A.G."/>
            <person name="Swale T."/>
            <person name="Shiue L."/>
            <person name="Berenbaum M.R."/>
        </authorList>
    </citation>
    <scope>NUCLEOTIDE SEQUENCE [GENOMIC DNA]</scope>
</reference>
<reference evidence="5" key="2">
    <citation type="journal article" date="2021" name="Molecules">
        <title>Fungal alpha-1,3-Glucan as a New Pathogen-Associated Molecular Pattern in the Insect Model Host Galleria mellonella.</title>
        <authorList>
            <person name="Staczek S."/>
            <person name="Zdybicka-Barabas A."/>
            <person name="Wojda I."/>
            <person name="Wiater A."/>
            <person name="Mak P."/>
            <person name="Suder P."/>
            <person name="Skrzypiec K."/>
            <person name="Cytrynska M."/>
        </authorList>
    </citation>
    <scope>DEVELOPMENTAL STAGE</scope>
    <scope>INDUCTION BY A.NIGER ALPHA-1,3-GLUCAN</scope>
</reference>
<sequence>MNFVKVLFFISACILIMLSAVSGAPEPRWKVFKKIERMGQHIRDGIIKAGPAVAVVGQASTIISG</sequence>
<keyword id="KW-0929">Antimicrobial</keyword>
<keyword id="KW-0391">Immunity</keyword>
<keyword id="KW-0399">Innate immunity</keyword>
<keyword id="KW-1185">Reference proteome</keyword>
<keyword id="KW-0964">Secreted</keyword>
<keyword id="KW-0732">Signal</keyword>
<organism evidence="6">
    <name type="scientific">Galleria mellonella</name>
    <name type="common">Greater wax moth</name>
    <dbReference type="NCBI Taxonomy" id="7137"/>
    <lineage>
        <taxon>Eukaryota</taxon>
        <taxon>Metazoa</taxon>
        <taxon>Ecdysozoa</taxon>
        <taxon>Arthropoda</taxon>
        <taxon>Hexapoda</taxon>
        <taxon>Insecta</taxon>
        <taxon>Pterygota</taxon>
        <taxon>Neoptera</taxon>
        <taxon>Endopterygota</taxon>
        <taxon>Lepidoptera</taxon>
        <taxon>Glossata</taxon>
        <taxon>Ditrysia</taxon>
        <taxon>Pyraloidea</taxon>
        <taxon>Pyralidae</taxon>
        <taxon>Galleriinae</taxon>
        <taxon>Galleria</taxon>
    </lineage>
</organism>